<reference key="1">
    <citation type="submission" date="2007-03" db="EMBL/GenBank/DDBJ databases">
        <title>Complete sequence of Shewanella loihica PV-4.</title>
        <authorList>
            <consortium name="US DOE Joint Genome Institute"/>
            <person name="Copeland A."/>
            <person name="Lucas S."/>
            <person name="Lapidus A."/>
            <person name="Barry K."/>
            <person name="Detter J.C."/>
            <person name="Glavina del Rio T."/>
            <person name="Hammon N."/>
            <person name="Israni S."/>
            <person name="Dalin E."/>
            <person name="Tice H."/>
            <person name="Pitluck S."/>
            <person name="Chain P."/>
            <person name="Malfatti S."/>
            <person name="Shin M."/>
            <person name="Vergez L."/>
            <person name="Schmutz J."/>
            <person name="Larimer F."/>
            <person name="Land M."/>
            <person name="Hauser L."/>
            <person name="Kyrpides N."/>
            <person name="Mikhailova N."/>
            <person name="Romine M.F."/>
            <person name="Serres G."/>
            <person name="Fredrickson J."/>
            <person name="Tiedje J."/>
            <person name="Richardson P."/>
        </authorList>
    </citation>
    <scope>NUCLEOTIDE SEQUENCE [LARGE SCALE GENOMIC DNA]</scope>
    <source>
        <strain>ATCC BAA-1088 / PV-4</strain>
    </source>
</reference>
<protein>
    <recommendedName>
        <fullName evidence="1">Ribosomal RNA large subunit methyltransferase E</fullName>
        <ecNumber evidence="1">2.1.1.166</ecNumber>
    </recommendedName>
    <alternativeName>
        <fullName evidence="1">23S rRNA Um2552 methyltransferase</fullName>
    </alternativeName>
    <alternativeName>
        <fullName evidence="1">rRNA (uridine-2'-O-)-methyltransferase</fullName>
    </alternativeName>
</protein>
<dbReference type="EC" id="2.1.1.166" evidence="1"/>
<dbReference type="EMBL" id="CP000606">
    <property type="protein sequence ID" value="ABO24701.1"/>
    <property type="molecule type" value="Genomic_DNA"/>
</dbReference>
<dbReference type="RefSeq" id="WP_011866632.1">
    <property type="nucleotide sequence ID" value="NC_009092.1"/>
</dbReference>
<dbReference type="SMR" id="A3QGV3"/>
<dbReference type="STRING" id="323850.Shew_2835"/>
<dbReference type="KEGG" id="slo:Shew_2835"/>
<dbReference type="eggNOG" id="COG0293">
    <property type="taxonomic scope" value="Bacteria"/>
</dbReference>
<dbReference type="HOGENOM" id="CLU_009422_4_0_6"/>
<dbReference type="OrthoDB" id="9790080at2"/>
<dbReference type="Proteomes" id="UP000001558">
    <property type="component" value="Chromosome"/>
</dbReference>
<dbReference type="GO" id="GO:0005737">
    <property type="term" value="C:cytoplasm"/>
    <property type="evidence" value="ECO:0007669"/>
    <property type="project" value="UniProtKB-SubCell"/>
</dbReference>
<dbReference type="GO" id="GO:0008650">
    <property type="term" value="F:rRNA (uridine-2'-O-)-methyltransferase activity"/>
    <property type="evidence" value="ECO:0007669"/>
    <property type="project" value="UniProtKB-UniRule"/>
</dbReference>
<dbReference type="FunFam" id="3.40.50.150:FF:000005">
    <property type="entry name" value="Ribosomal RNA large subunit methyltransferase E"/>
    <property type="match status" value="1"/>
</dbReference>
<dbReference type="Gene3D" id="3.40.50.150">
    <property type="entry name" value="Vaccinia Virus protein VP39"/>
    <property type="match status" value="1"/>
</dbReference>
<dbReference type="HAMAP" id="MF_01547">
    <property type="entry name" value="RNA_methyltr_E"/>
    <property type="match status" value="1"/>
</dbReference>
<dbReference type="InterPro" id="IPR050082">
    <property type="entry name" value="RNA_methyltr_RlmE"/>
</dbReference>
<dbReference type="InterPro" id="IPR002877">
    <property type="entry name" value="RNA_MeTrfase_FtsJ_dom"/>
</dbReference>
<dbReference type="InterPro" id="IPR015507">
    <property type="entry name" value="rRNA-MeTfrase_E"/>
</dbReference>
<dbReference type="InterPro" id="IPR029063">
    <property type="entry name" value="SAM-dependent_MTases_sf"/>
</dbReference>
<dbReference type="NCBIfam" id="NF008390">
    <property type="entry name" value="PRK11188.1"/>
    <property type="match status" value="1"/>
</dbReference>
<dbReference type="PANTHER" id="PTHR10920">
    <property type="entry name" value="RIBOSOMAL RNA METHYLTRANSFERASE"/>
    <property type="match status" value="1"/>
</dbReference>
<dbReference type="PANTHER" id="PTHR10920:SF18">
    <property type="entry name" value="RRNA METHYLTRANSFERASE 2, MITOCHONDRIAL"/>
    <property type="match status" value="1"/>
</dbReference>
<dbReference type="Pfam" id="PF01728">
    <property type="entry name" value="FtsJ"/>
    <property type="match status" value="1"/>
</dbReference>
<dbReference type="PIRSF" id="PIRSF005461">
    <property type="entry name" value="23S_rRNA_mtase"/>
    <property type="match status" value="1"/>
</dbReference>
<dbReference type="SUPFAM" id="SSF53335">
    <property type="entry name" value="S-adenosyl-L-methionine-dependent methyltransferases"/>
    <property type="match status" value="1"/>
</dbReference>
<gene>
    <name evidence="1" type="primary">rlmE</name>
    <name evidence="1" type="synonym">ftsJ</name>
    <name evidence="1" type="synonym">rrmJ</name>
    <name type="ordered locus">Shew_2835</name>
</gene>
<name>RLME_SHELP</name>
<accession>A3QGV3</accession>
<proteinExistence type="inferred from homology"/>
<comment type="function">
    <text evidence="1">Specifically methylates the uridine in position 2552 of 23S rRNA at the 2'-O position of the ribose in the fully assembled 50S ribosomal subunit.</text>
</comment>
<comment type="catalytic activity">
    <reaction evidence="1">
        <text>uridine(2552) in 23S rRNA + S-adenosyl-L-methionine = 2'-O-methyluridine(2552) in 23S rRNA + S-adenosyl-L-homocysteine + H(+)</text>
        <dbReference type="Rhea" id="RHEA:42720"/>
        <dbReference type="Rhea" id="RHEA-COMP:10202"/>
        <dbReference type="Rhea" id="RHEA-COMP:10203"/>
        <dbReference type="ChEBI" id="CHEBI:15378"/>
        <dbReference type="ChEBI" id="CHEBI:57856"/>
        <dbReference type="ChEBI" id="CHEBI:59789"/>
        <dbReference type="ChEBI" id="CHEBI:65315"/>
        <dbReference type="ChEBI" id="CHEBI:74478"/>
        <dbReference type="EC" id="2.1.1.166"/>
    </reaction>
</comment>
<comment type="subcellular location">
    <subcellularLocation>
        <location evidence="1">Cytoplasm</location>
    </subcellularLocation>
</comment>
<comment type="similarity">
    <text evidence="1">Belongs to the class I-like SAM-binding methyltransferase superfamily. RNA methyltransferase RlmE family.</text>
</comment>
<organism>
    <name type="scientific">Shewanella loihica (strain ATCC BAA-1088 / PV-4)</name>
    <dbReference type="NCBI Taxonomy" id="323850"/>
    <lineage>
        <taxon>Bacteria</taxon>
        <taxon>Pseudomonadati</taxon>
        <taxon>Pseudomonadota</taxon>
        <taxon>Gammaproteobacteria</taxon>
        <taxon>Alteromonadales</taxon>
        <taxon>Shewanellaceae</taxon>
        <taxon>Shewanella</taxon>
    </lineage>
</organism>
<sequence length="209" mass="23124">MSGKKRTASSTRWMQEHFDDHYVKLSQKRGLRSRAAFKIEEIQQKDKLIRPGMTVVDLGAAPGGWSQIAVKLAGETGKVIACDILPMDPIVGVDFLQGDFREEKVLNALLERVGDAKVDVVLSDMAPNMSGTGGVDQPRAMYLVELALDMCHQVLAPNGSFAVKVFQGEGFDEYMKAVREAFTTVKTRKPDSSRPRSREVYLVATGYKL</sequence>
<feature type="chain" id="PRO_0000300599" description="Ribosomal RNA large subunit methyltransferase E">
    <location>
        <begin position="1"/>
        <end position="209"/>
    </location>
</feature>
<feature type="active site" description="Proton acceptor" evidence="1">
    <location>
        <position position="164"/>
    </location>
</feature>
<feature type="binding site" evidence="1">
    <location>
        <position position="63"/>
    </location>
    <ligand>
        <name>S-adenosyl-L-methionine</name>
        <dbReference type="ChEBI" id="CHEBI:59789"/>
    </ligand>
</feature>
<feature type="binding site" evidence="1">
    <location>
        <position position="65"/>
    </location>
    <ligand>
        <name>S-adenosyl-L-methionine</name>
        <dbReference type="ChEBI" id="CHEBI:59789"/>
    </ligand>
</feature>
<feature type="binding site" evidence="1">
    <location>
        <position position="83"/>
    </location>
    <ligand>
        <name>S-adenosyl-L-methionine</name>
        <dbReference type="ChEBI" id="CHEBI:59789"/>
    </ligand>
</feature>
<feature type="binding site" evidence="1">
    <location>
        <position position="99"/>
    </location>
    <ligand>
        <name>S-adenosyl-L-methionine</name>
        <dbReference type="ChEBI" id="CHEBI:59789"/>
    </ligand>
</feature>
<feature type="binding site" evidence="1">
    <location>
        <position position="124"/>
    </location>
    <ligand>
        <name>S-adenosyl-L-methionine</name>
        <dbReference type="ChEBI" id="CHEBI:59789"/>
    </ligand>
</feature>
<evidence type="ECO:0000255" key="1">
    <source>
        <dbReference type="HAMAP-Rule" id="MF_01547"/>
    </source>
</evidence>
<keyword id="KW-0963">Cytoplasm</keyword>
<keyword id="KW-0489">Methyltransferase</keyword>
<keyword id="KW-1185">Reference proteome</keyword>
<keyword id="KW-0698">rRNA processing</keyword>
<keyword id="KW-0949">S-adenosyl-L-methionine</keyword>
<keyword id="KW-0808">Transferase</keyword>